<evidence type="ECO:0000250" key="1">
    <source>
        <dbReference type="UniProtKB" id="A0A1C9J6A7"/>
    </source>
</evidence>
<evidence type="ECO:0000250" key="2">
    <source>
        <dbReference type="UniProtKB" id="Q40577"/>
    </source>
</evidence>
<evidence type="ECO:0000250" key="3">
    <source>
        <dbReference type="UniProtKB" id="Q9AR86"/>
    </source>
</evidence>
<evidence type="ECO:0000255" key="4"/>
<evidence type="ECO:0000269" key="5">
    <source>
    </source>
</evidence>
<evidence type="ECO:0000269" key="6">
    <source>
    </source>
</evidence>
<evidence type="ECO:0000303" key="7">
    <source>
    </source>
</evidence>
<evidence type="ECO:0000303" key="8">
    <source ref="5"/>
</evidence>
<evidence type="ECO:0000305" key="9"/>
<keyword id="KW-0025">Alternative splicing</keyword>
<keyword id="KW-0150">Chloroplast</keyword>
<keyword id="KW-0456">Lyase</keyword>
<keyword id="KW-0460">Magnesium</keyword>
<keyword id="KW-0464">Manganese</keyword>
<keyword id="KW-0479">Metal-binding</keyword>
<keyword id="KW-0934">Plastid</keyword>
<keyword id="KW-1185">Reference proteome</keyword>
<keyword id="KW-0809">Transit peptide</keyword>
<reference key="1">
    <citation type="journal article" date="2004" name="Plant Physiol.">
        <title>Characterization of a root-specific Arabidopsis terpene synthase responsible for the formation of the volatile monoterpene 1,8-cineole.</title>
        <authorList>
            <person name="Chen F."/>
            <person name="Ro D.K."/>
            <person name="Petri J."/>
            <person name="Gershenzon J."/>
            <person name="Bohlmann J."/>
            <person name="Pichersky E."/>
            <person name="Tholl D."/>
        </authorList>
    </citation>
    <scope>NUCLEOTIDE SEQUENCE [MRNA] (ISOFORM 1)</scope>
    <scope>FUNCTION</scope>
    <scope>CATALYTIC ACTIVITY</scope>
    <scope>TISSUE SPECIFICITY</scope>
    <scope>INDUCTION</scope>
    <scope>BIOPHYSICOCHEMICAL PROPERTIES</scope>
</reference>
<reference key="2">
    <citation type="journal article" date="2000" name="DNA Res.">
        <title>Structural analysis of Arabidopsis thaliana chromosome 3. II. Sequence features of the 4,251,695 bp regions covered by 90 P1, TAC and BAC clones.</title>
        <authorList>
            <person name="Kaneko T."/>
            <person name="Katoh T."/>
            <person name="Sato S."/>
            <person name="Nakamura Y."/>
            <person name="Asamizu E."/>
            <person name="Tabata S."/>
        </authorList>
    </citation>
    <scope>NUCLEOTIDE SEQUENCE [LARGE SCALE GENOMIC DNA]</scope>
    <source>
        <strain>cv. Columbia</strain>
    </source>
</reference>
<reference key="3">
    <citation type="journal article" date="2000" name="DNA Res.">
        <title>Structural analysis of Arabidopsis thaliana chromosome 3. I. Sequence features of the regions of 4,504,864 bp covered by sixty P1 and TAC clones.</title>
        <authorList>
            <person name="Sato S."/>
            <person name="Nakamura Y."/>
            <person name="Kaneko T."/>
            <person name="Katoh T."/>
            <person name="Asamizu E."/>
            <person name="Tabata S."/>
        </authorList>
    </citation>
    <scope>NUCLEOTIDE SEQUENCE [LARGE SCALE GENOMIC DNA]</scope>
    <source>
        <strain>cv. Columbia</strain>
    </source>
</reference>
<reference key="4">
    <citation type="journal article" date="2017" name="Plant J.">
        <title>Araport11: a complete reannotation of the Arabidopsis thaliana reference genome.</title>
        <authorList>
            <person name="Cheng C.Y."/>
            <person name="Krishnakumar V."/>
            <person name="Chan A.P."/>
            <person name="Thibaud-Nissen F."/>
            <person name="Schobel S."/>
            <person name="Town C.D."/>
        </authorList>
    </citation>
    <scope>GENOME REANNOTATION</scope>
    <source>
        <strain>cv. Columbia</strain>
    </source>
</reference>
<reference key="5">
    <citation type="submission" date="2006-07" db="EMBL/GenBank/DDBJ databases">
        <title>Large-scale analysis of RIKEN Arabidopsis full-length (RAFL) cDNAs.</title>
        <authorList>
            <person name="Totoki Y."/>
            <person name="Seki M."/>
            <person name="Ishida J."/>
            <person name="Nakajima M."/>
            <person name="Enju A."/>
            <person name="Kamiya A."/>
            <person name="Narusaka M."/>
            <person name="Shin-i T."/>
            <person name="Nakagawa M."/>
            <person name="Sakamoto N."/>
            <person name="Oishi K."/>
            <person name="Kohara Y."/>
            <person name="Kobayashi M."/>
            <person name="Toyoda A."/>
            <person name="Sakaki Y."/>
            <person name="Sakurai T."/>
            <person name="Iida K."/>
            <person name="Akiyama K."/>
            <person name="Satou M."/>
            <person name="Toyoda T."/>
            <person name="Konagaya A."/>
            <person name="Carninci P."/>
            <person name="Kawai J."/>
            <person name="Hayashizaki Y."/>
            <person name="Shinozaki K."/>
        </authorList>
    </citation>
    <scope>NUCLEOTIDE SEQUENCE [LARGE SCALE MRNA] (ISOFORM 2)</scope>
    <source>
        <strain>cv. Columbia</strain>
    </source>
</reference>
<reference key="6">
    <citation type="journal article" date="2009" name="DNA Res.">
        <title>Analysis of multiple occurrences of alternative splicing events in Arabidopsis thaliana using novel sequenced full-length cDNAs.</title>
        <authorList>
            <person name="Iida K."/>
            <person name="Fukami-Kobayashi K."/>
            <person name="Toyoda A."/>
            <person name="Sakaki Y."/>
            <person name="Kobayashi M."/>
            <person name="Seki M."/>
            <person name="Shinozaki K."/>
        </authorList>
    </citation>
    <scope>NUCLEOTIDE SEQUENCE [LARGE SCALE MRNA] (ISOFORM 2)</scope>
    <source>
        <strain>cv. Columbia</strain>
        <tissue>Rosette leaf</tissue>
    </source>
</reference>
<reference key="7">
    <citation type="journal article" date="2002" name="Mol. Genet. Genomics">
        <title>Genomic analysis of the terpenoid synthase (AtTPS) gene family of Arabidopsis thaliana.</title>
        <authorList>
            <person name="Aubourg S."/>
            <person name="Lecharny A."/>
            <person name="Bohlmann J."/>
        </authorList>
    </citation>
    <scope>IDENTIFICATION</scope>
    <scope>GENE FAMILY</scope>
    <scope>NOMENCLATURE</scope>
</reference>
<reference key="8">
    <citation type="journal article" date="2003" name="Plant Cell">
        <title>Biosynthesis and emission of terpenoid volatiles from Arabidopsis flowers.</title>
        <authorList>
            <person name="Chen F."/>
            <person name="Tholl D."/>
            <person name="D'Auria J.C."/>
            <person name="Farooq A."/>
            <person name="Pichersky E."/>
            <person name="Gershenzon J."/>
        </authorList>
    </citation>
    <scope>TISSUE SPECIFICITY</scope>
</reference>
<reference key="9">
    <citation type="journal article" date="2003" name="Plant Mol. Biol.">
        <title>Genome organization in Arabidopsis thaliana: a survey for genes involved in isoprenoid and chlorophyll metabolism.</title>
        <authorList>
            <person name="Lange B.M."/>
            <person name="Ghassemian M."/>
        </authorList>
    </citation>
    <scope>GENE FAMILY</scope>
</reference>
<accession>P0DI76</accession>
<accession>A0A1I9LQI2</accession>
<accession>C0Z3K7</accession>
<accession>Q0WMV0</accession>
<accession>Q9LDF1</accession>
<protein>
    <recommendedName>
        <fullName>1,8-cineole synthase 1, chloroplastic</fullName>
        <shortName>AtTPS-CIN1</shortName>
        <ecNumber>4.2.3.108</ecNumber>
    </recommendedName>
    <alternativeName>
        <fullName>Limonene cyclase</fullName>
    </alternativeName>
    <alternativeName>
        <fullName>Terpenoid synthase 27</fullName>
        <shortName>AtTPS27</shortName>
    </alternativeName>
</protein>
<organism>
    <name type="scientific">Arabidopsis thaliana</name>
    <name type="common">Mouse-ear cress</name>
    <dbReference type="NCBI Taxonomy" id="3702"/>
    <lineage>
        <taxon>Eukaryota</taxon>
        <taxon>Viridiplantae</taxon>
        <taxon>Streptophyta</taxon>
        <taxon>Embryophyta</taxon>
        <taxon>Tracheophyta</taxon>
        <taxon>Spermatophyta</taxon>
        <taxon>Magnoliopsida</taxon>
        <taxon>eudicotyledons</taxon>
        <taxon>Gunneridae</taxon>
        <taxon>Pentapetalae</taxon>
        <taxon>rosids</taxon>
        <taxon>malvids</taxon>
        <taxon>Brassicales</taxon>
        <taxon>Brassicaceae</taxon>
        <taxon>Camelineae</taxon>
        <taxon>Arabidopsis</taxon>
    </lineage>
</organism>
<comment type="function">
    <text evidence="6">Involved in monoterpene (C10) biosynthesis. The major product is 1,8-cineole (52%) followed by minor amounts of sabinene (14.5%), myrcene (13.3%), (-)-(1S)-beta-pinene (7.8%), (-)-(4S)-limonene (4.0%), (E)-beta-ocimene (2.7%), alpha-terpineol (2.4%), (-)-(1S)-alpha-pinene (1.9%), terpinolene (0.8%), and (+)-alpha-thujene (0.6%).</text>
</comment>
<comment type="catalytic activity">
    <reaction evidence="6">
        <text>(2E)-geranyl diphosphate + H2O = 1,8-cineole + diphosphate</text>
        <dbReference type="Rhea" id="RHEA:32543"/>
        <dbReference type="ChEBI" id="CHEBI:15377"/>
        <dbReference type="ChEBI" id="CHEBI:27961"/>
        <dbReference type="ChEBI" id="CHEBI:33019"/>
        <dbReference type="ChEBI" id="CHEBI:58057"/>
        <dbReference type="EC" id="4.2.3.108"/>
    </reaction>
</comment>
<comment type="cofactor">
    <cofactor evidence="1">
        <name>Mg(2+)</name>
        <dbReference type="ChEBI" id="CHEBI:18420"/>
    </cofactor>
    <cofactor evidence="1">
        <name>Mn(2+)</name>
        <dbReference type="ChEBI" id="CHEBI:29035"/>
    </cofactor>
    <text evidence="1">Binds 3 Mg(2+) or Mn(2+) ions per subunit.</text>
</comment>
<comment type="biophysicochemical properties">
    <kinetics>
        <KM evidence="6">0.2 uM for geranyl diphosphate</KM>
        <Vmax evidence="6">10.9 pmol/sec/mg enzyme toward geranyl diphosphate</Vmax>
    </kinetics>
    <phDependence>
        <text evidence="6">Optimum pH is 8.0.</text>
    </phDependence>
</comment>
<comment type="pathway">
    <text>Secondary metabolite biosynthesis; terpenoid biosynthesis.</text>
</comment>
<comment type="subcellular location">
    <subcellularLocation>
        <location evidence="9">Plastid</location>
        <location evidence="9">Chloroplast</location>
    </subcellularLocation>
</comment>
<comment type="alternative products">
    <event type="alternative splicing"/>
    <isoform>
        <id>P0DI76-1</id>
        <name>1</name>
        <sequence type="displayed"/>
    </isoform>
    <isoform>
        <id>P0DI76-2</id>
        <name>2</name>
        <sequence type="described" ref="VSP_035149 VSP_035150"/>
    </isoform>
</comment>
<comment type="tissue specificity">
    <text evidence="5 6">Predominantly expressed in roots and at much lower levels in siliques. Not found in leaves, flowers or stems. Also detected in flowers in cv. Landsberg erecta. Not expressed in root apical meristem and elongation zone. Found in the vascular system of young roots and additionally in the cortex and epidermal cell layer of older roots.</text>
</comment>
<comment type="induction">
    <text evidence="6">Not induces in aerial parts by treatments with jasmonic acid, 6-ethyl indanoyl-L-Ile, fungal peptaibol elicitor alamethicin or herbivory.</text>
</comment>
<comment type="domain">
    <text evidence="2">The Asp-Asp-Xaa-Xaa-Asp/Glu (DDXXD/E) motif is important for the catalytic activity, presumably through binding to Mg(2+).</text>
</comment>
<comment type="miscellaneous">
    <molecule>Isoform 2</molecule>
    <text evidence="9">May be due to intron retention.</text>
</comment>
<comment type="similarity">
    <text evidence="9">Belongs to the terpene synthase family. Tpsb subfamily.</text>
</comment>
<name>CIN1_ARATH</name>
<feature type="transit peptide" description="Chloroplast" evidence="4">
    <location>
        <begin position="1"/>
        <end position="31"/>
    </location>
</feature>
<feature type="chain" id="PRO_0000348419" description="1,8-cineole synthase 1, chloroplastic">
    <location>
        <begin position="32"/>
        <end position="600"/>
    </location>
</feature>
<feature type="short sequence motif" description="DDXXD motif">
    <location>
        <begin position="342"/>
        <end position="346"/>
    </location>
</feature>
<feature type="binding site" evidence="3">
    <location>
        <position position="342"/>
    </location>
    <ligand>
        <name>dimethylallyl diphosphate</name>
        <dbReference type="ChEBI" id="CHEBI:57623"/>
    </ligand>
</feature>
<feature type="binding site" evidence="2">
    <location>
        <position position="342"/>
    </location>
    <ligand>
        <name>Mg(2+)</name>
        <dbReference type="ChEBI" id="CHEBI:18420"/>
        <label>1</label>
    </ligand>
</feature>
<feature type="binding site" evidence="2">
    <location>
        <position position="342"/>
    </location>
    <ligand>
        <name>Mg(2+)</name>
        <dbReference type="ChEBI" id="CHEBI:18420"/>
        <label>2</label>
    </ligand>
</feature>
<feature type="binding site" evidence="2">
    <location>
        <position position="346"/>
    </location>
    <ligand>
        <name>Mg(2+)</name>
        <dbReference type="ChEBI" id="CHEBI:18420"/>
        <label>1</label>
    </ligand>
</feature>
<feature type="binding site" evidence="2">
    <location>
        <position position="346"/>
    </location>
    <ligand>
        <name>Mg(2+)</name>
        <dbReference type="ChEBI" id="CHEBI:18420"/>
        <label>2</label>
    </ligand>
</feature>
<feature type="binding site" evidence="3">
    <location>
        <position position="420"/>
    </location>
    <ligand>
        <name>dimethylallyl diphosphate</name>
        <dbReference type="ChEBI" id="CHEBI:57623"/>
    </ligand>
</feature>
<feature type="binding site" evidence="3">
    <location>
        <position position="484"/>
    </location>
    <ligand>
        <name>dimethylallyl diphosphate</name>
        <dbReference type="ChEBI" id="CHEBI:57623"/>
    </ligand>
</feature>
<feature type="binding site" evidence="3">
    <location>
        <position position="487"/>
    </location>
    <ligand>
        <name>dimethylallyl diphosphate</name>
        <dbReference type="ChEBI" id="CHEBI:57623"/>
    </ligand>
</feature>
<feature type="binding site" evidence="2">
    <location>
        <position position="487"/>
    </location>
    <ligand>
        <name>Mg(2+)</name>
        <dbReference type="ChEBI" id="CHEBI:18420"/>
        <label>3</label>
    </ligand>
</feature>
<feature type="binding site" evidence="2">
    <location>
        <position position="491"/>
    </location>
    <ligand>
        <name>Mg(2+)</name>
        <dbReference type="ChEBI" id="CHEBI:18420"/>
        <label>3</label>
    </ligand>
</feature>
<feature type="binding site" evidence="2">
    <location>
        <position position="495"/>
    </location>
    <ligand>
        <name>Mg(2+)</name>
        <dbReference type="ChEBI" id="CHEBI:18420"/>
        <label>3</label>
    </ligand>
</feature>
<feature type="splice variant" id="VSP_035149" description="In isoform 2." evidence="7 8">
    <original>NWDVNRLGELPEYMRLCFLILYNEINGIGCDIL</original>
    <variation>KLRNILPFFGQSIGYFAAVPWSTTRPLLQKSST</variation>
    <location>
        <begin position="363"/>
        <end position="395"/>
    </location>
</feature>
<feature type="splice variant" id="VSP_035150" description="In isoform 2." evidence="7 8">
    <location>
        <begin position="396"/>
        <end position="600"/>
    </location>
</feature>
<proteinExistence type="evidence at protein level"/>
<sequence>MATLRISSALIYQNTLTHHFRLRRPHRFVCKSMTKTTPDTTLVELSRRSGNYQPSPWNHCYLLSIENKYASETEVITRDVLKKKVKSMLDDEKKSRLEQLELIDDLQKLGVSYHFEIEINDTLTDLHLKMGRNCWKCDKEEDLHATSLEFRLLRQHGFDVSENIFDVIIDQIESNTFKTNNINGIISLYEASYLSTKSDTKLHKVIRPFATEQIRKFVDDEDTKNIEVREKAYHALEMPYHWRMRRLDTRWYIDAYEKKHDMNLVLIEFAKIDFNIVQAAHQEDLKYVSRWWKDTCLTNQLPFVRDRIVENYFWTVGLIYEPQFGYIRRIMTIVNALVTTIDDIYDIYGTLEELELFTSMVENWDVNRLGELPEYMRLCFLILYNEINGIGCDILKYKKIDVIPYLKKSWADLCRTYLVEAKWYKRGYKPSLEEYMQNAWISISAPTILIHFYCVFSDQISVQNLETLSQHRQHIVRCSATVLRLANDLGTSPTELARGDVLKSVQCYMHETGASEERARDHVHQMISDMWDDMNSETKTACNSSSRSRGFKEAAMNLARMSQCMYQYGDGHGCPEKAKTIDRVQSLLVDPIPLDVNRLG</sequence>
<dbReference type="EC" id="4.2.3.108"/>
<dbReference type="EMBL" id="AY691947">
    <property type="protein sequence ID" value="AAU01970.1"/>
    <property type="molecule type" value="mRNA"/>
</dbReference>
<dbReference type="EMBL" id="AP000599">
    <property type="protein sequence ID" value="BAB01180.1"/>
    <property type="molecule type" value="Genomic_DNA"/>
</dbReference>
<dbReference type="EMBL" id="AB028607">
    <property type="protein sequence ID" value="BAB01180.1"/>
    <property type="status" value="JOINED"/>
    <property type="molecule type" value="Genomic_DNA"/>
</dbReference>
<dbReference type="EMBL" id="CP002686">
    <property type="protein sequence ID" value="AEE77073.1"/>
    <property type="molecule type" value="Genomic_DNA"/>
</dbReference>
<dbReference type="EMBL" id="CP002686">
    <property type="protein sequence ID" value="ANM64839.1"/>
    <property type="molecule type" value="Genomic_DNA"/>
</dbReference>
<dbReference type="EMBL" id="CP002686">
    <property type="protein sequence ID" value="ANM64840.1"/>
    <property type="molecule type" value="Genomic_DNA"/>
</dbReference>
<dbReference type="EMBL" id="AK229712">
    <property type="protein sequence ID" value="BAF01550.1"/>
    <property type="molecule type" value="mRNA"/>
</dbReference>
<dbReference type="EMBL" id="AK319171">
    <property type="protein sequence ID" value="BAH57286.1"/>
    <property type="molecule type" value="mRNA"/>
</dbReference>
<dbReference type="RefSeq" id="NP_001326843.1">
    <molecule id="P0DI76-2"/>
    <property type="nucleotide sequence ID" value="NM_001338768.1"/>
</dbReference>
<dbReference type="RefSeq" id="NP_001326844.1">
    <molecule id="P0DI76-2"/>
    <property type="nucleotide sequence ID" value="NM_001338769.1"/>
</dbReference>
<dbReference type="RefSeq" id="NP_189210.2">
    <molecule id="P0DI76-1"/>
    <property type="nucleotide sequence ID" value="NM_113483.5"/>
</dbReference>
<dbReference type="RefSeq" id="NP_189212.1">
    <molecule id="P0DI76-1"/>
    <property type="nucleotide sequence ID" value="NM_113485.5"/>
</dbReference>
<dbReference type="SMR" id="P0DI76"/>
<dbReference type="FunCoup" id="P0DI76">
    <property type="interactions" value="120"/>
</dbReference>
<dbReference type="STRING" id="3702.P0DI76"/>
<dbReference type="PaxDb" id="3702-AT3G25820.1"/>
<dbReference type="EnsemblPlants" id="AT3G25820.1">
    <molecule id="P0DI76-1"/>
    <property type="protein sequence ID" value="AT3G25820.1"/>
    <property type="gene ID" value="AT3G25820"/>
</dbReference>
<dbReference type="EnsemblPlants" id="AT3G25820.3">
    <property type="protein sequence ID" value="AT3G25820.3"/>
    <property type="gene ID" value="AT3G25820"/>
</dbReference>
<dbReference type="EnsemblPlants" id="AT3G25820.4">
    <property type="protein sequence ID" value="AT3G25820.4"/>
    <property type="gene ID" value="AT3G25820"/>
</dbReference>
<dbReference type="EnsemblPlants" id="AT3G25830.1">
    <molecule id="P0DI76-1"/>
    <property type="protein sequence ID" value="AT3G25830.1"/>
    <property type="gene ID" value="AT3G25830"/>
</dbReference>
<dbReference type="Gramene" id="AT3G25820.1">
    <molecule id="P0DI76-1"/>
    <property type="protein sequence ID" value="AT3G25820.1"/>
    <property type="gene ID" value="AT3G25820"/>
</dbReference>
<dbReference type="Gramene" id="AT3G25820.3">
    <property type="protein sequence ID" value="AT3G25820.3"/>
    <property type="gene ID" value="AT3G25820"/>
</dbReference>
<dbReference type="Gramene" id="AT3G25820.4">
    <property type="protein sequence ID" value="AT3G25820.4"/>
    <property type="gene ID" value="AT3G25820"/>
</dbReference>
<dbReference type="Gramene" id="AT3G25830.1">
    <molecule id="P0DI76-1"/>
    <property type="protein sequence ID" value="AT3G25830.1"/>
    <property type="gene ID" value="AT3G25830"/>
</dbReference>
<dbReference type="KEGG" id="ath:AT3G25820"/>
<dbReference type="KEGG" id="ath:AT3G25830"/>
<dbReference type="Araport" id="AT3G25820"/>
<dbReference type="TAIR" id="AT3G25820">
    <property type="gene designation" value="TPS-CIN"/>
</dbReference>
<dbReference type="eggNOG" id="ENOG502QUH3">
    <property type="taxonomic scope" value="Eukaryota"/>
</dbReference>
<dbReference type="HOGENOM" id="CLU_003125_7_1_1"/>
<dbReference type="InParanoid" id="P0DI76"/>
<dbReference type="OMA" id="YMHETGR"/>
<dbReference type="PhylomeDB" id="P0DI76"/>
<dbReference type="BRENDA" id="4.2.3.108">
    <property type="organism ID" value="399"/>
</dbReference>
<dbReference type="BRENDA" id="4.2.3.109">
    <property type="organism ID" value="399"/>
</dbReference>
<dbReference type="SABIO-RK" id="P0DI76"/>
<dbReference type="UniPathway" id="UPA00213"/>
<dbReference type="PRO" id="PR:P0DI76"/>
<dbReference type="Proteomes" id="UP000006548">
    <property type="component" value="Chromosome 3"/>
</dbReference>
<dbReference type="ExpressionAtlas" id="P0DI76">
    <property type="expression patterns" value="baseline and differential"/>
</dbReference>
<dbReference type="GO" id="GO:0009507">
    <property type="term" value="C:chloroplast"/>
    <property type="evidence" value="ECO:0007669"/>
    <property type="project" value="UniProtKB-SubCell"/>
</dbReference>
<dbReference type="GO" id="GO:0102313">
    <property type="term" value="F:1,8-cineole synthase activity"/>
    <property type="evidence" value="ECO:0007669"/>
    <property type="project" value="UniProtKB-EC"/>
</dbReference>
<dbReference type="GO" id="GO:0000287">
    <property type="term" value="F:magnesium ion binding"/>
    <property type="evidence" value="ECO:0007669"/>
    <property type="project" value="InterPro"/>
</dbReference>
<dbReference type="GO" id="GO:0010333">
    <property type="term" value="F:terpene synthase activity"/>
    <property type="evidence" value="ECO:0007669"/>
    <property type="project" value="InterPro"/>
</dbReference>
<dbReference type="GO" id="GO:0016102">
    <property type="term" value="P:diterpenoid biosynthetic process"/>
    <property type="evidence" value="ECO:0007669"/>
    <property type="project" value="InterPro"/>
</dbReference>
<dbReference type="CDD" id="cd00684">
    <property type="entry name" value="Terpene_cyclase_plant_C1"/>
    <property type="match status" value="1"/>
</dbReference>
<dbReference type="FunFam" id="1.10.600.10:FF:000007">
    <property type="entry name" value="Isoprene synthase, chloroplastic"/>
    <property type="match status" value="1"/>
</dbReference>
<dbReference type="Gene3D" id="1.10.600.10">
    <property type="entry name" value="Farnesyl Diphosphate Synthase"/>
    <property type="match status" value="1"/>
</dbReference>
<dbReference type="Gene3D" id="1.50.10.130">
    <property type="entry name" value="Terpene synthase, N-terminal domain"/>
    <property type="match status" value="1"/>
</dbReference>
<dbReference type="InterPro" id="IPR008949">
    <property type="entry name" value="Isoprenoid_synthase_dom_sf"/>
</dbReference>
<dbReference type="InterPro" id="IPR034741">
    <property type="entry name" value="Terpene_cyclase-like_1_C"/>
</dbReference>
<dbReference type="InterPro" id="IPR044814">
    <property type="entry name" value="Terpene_cyclase_plant_C1"/>
</dbReference>
<dbReference type="InterPro" id="IPR001906">
    <property type="entry name" value="Terpene_synth_N"/>
</dbReference>
<dbReference type="InterPro" id="IPR036965">
    <property type="entry name" value="Terpene_synth_N_sf"/>
</dbReference>
<dbReference type="InterPro" id="IPR050148">
    <property type="entry name" value="Terpene_synthase-like"/>
</dbReference>
<dbReference type="InterPro" id="IPR005630">
    <property type="entry name" value="Terpene_synthase_metal-bd"/>
</dbReference>
<dbReference type="InterPro" id="IPR008930">
    <property type="entry name" value="Terpenoid_cyclase/PrenylTrfase"/>
</dbReference>
<dbReference type="PANTHER" id="PTHR31225:SF244">
    <property type="entry name" value="1,8-CINEOLE SYNTHASE 1, CHLOROPLASTIC-RELATED"/>
    <property type="match status" value="1"/>
</dbReference>
<dbReference type="PANTHER" id="PTHR31225">
    <property type="entry name" value="OS04G0344100 PROTEIN-RELATED"/>
    <property type="match status" value="1"/>
</dbReference>
<dbReference type="Pfam" id="PF01397">
    <property type="entry name" value="Terpene_synth"/>
    <property type="match status" value="1"/>
</dbReference>
<dbReference type="Pfam" id="PF03936">
    <property type="entry name" value="Terpene_synth_C"/>
    <property type="match status" value="1"/>
</dbReference>
<dbReference type="SFLD" id="SFLDS00005">
    <property type="entry name" value="Isoprenoid_Synthase_Type_I"/>
    <property type="match status" value="1"/>
</dbReference>
<dbReference type="SFLD" id="SFLDG01019">
    <property type="entry name" value="Terpene_Cyclase_Like_1_C_Termi"/>
    <property type="match status" value="1"/>
</dbReference>
<dbReference type="SUPFAM" id="SSF48239">
    <property type="entry name" value="Terpenoid cyclases/Protein prenyltransferases"/>
    <property type="match status" value="1"/>
</dbReference>
<dbReference type="SUPFAM" id="SSF48576">
    <property type="entry name" value="Terpenoid synthases"/>
    <property type="match status" value="1"/>
</dbReference>
<gene>
    <name type="primary">TPS27</name>
    <name type="synonym">TPS-CIN1</name>
    <name type="ordered locus">At3g25820</name>
    <name type="ORF">K13N2.19</name>
</gene>